<evidence type="ECO:0000255" key="1">
    <source>
        <dbReference type="HAMAP-Rule" id="MF_00089"/>
    </source>
</evidence>
<protein>
    <recommendedName>
        <fullName evidence="1">Phosphomethylpyrimidine synthase</fullName>
        <ecNumber evidence="1">4.1.99.17</ecNumber>
    </recommendedName>
    <alternativeName>
        <fullName evidence="1">Hydroxymethylpyrimidine phosphate synthase</fullName>
        <shortName evidence="1">HMP-P synthase</shortName>
        <shortName evidence="1">HMP-phosphate synthase</shortName>
        <shortName evidence="1">HMPP synthase</shortName>
    </alternativeName>
    <alternativeName>
        <fullName evidence="1">Thiamine biosynthesis protein ThiC</fullName>
    </alternativeName>
</protein>
<gene>
    <name evidence="1" type="primary">thiC</name>
    <name type="ordered locus">Dred_2890</name>
</gene>
<accession>A4J8J1</accession>
<dbReference type="EC" id="4.1.99.17" evidence="1"/>
<dbReference type="EMBL" id="CP000612">
    <property type="protein sequence ID" value="ABO51394.1"/>
    <property type="molecule type" value="Genomic_DNA"/>
</dbReference>
<dbReference type="RefSeq" id="WP_011879187.1">
    <property type="nucleotide sequence ID" value="NC_009253.1"/>
</dbReference>
<dbReference type="SMR" id="A4J8J1"/>
<dbReference type="STRING" id="349161.Dred_2890"/>
<dbReference type="KEGG" id="drm:Dred_2890"/>
<dbReference type="eggNOG" id="COG0422">
    <property type="taxonomic scope" value="Bacteria"/>
</dbReference>
<dbReference type="HOGENOM" id="CLU_013181_2_2_9"/>
<dbReference type="OrthoDB" id="9805897at2"/>
<dbReference type="UniPathway" id="UPA00060"/>
<dbReference type="Proteomes" id="UP000001556">
    <property type="component" value="Chromosome"/>
</dbReference>
<dbReference type="GO" id="GO:0051539">
    <property type="term" value="F:4 iron, 4 sulfur cluster binding"/>
    <property type="evidence" value="ECO:0007669"/>
    <property type="project" value="UniProtKB-KW"/>
</dbReference>
<dbReference type="GO" id="GO:0016830">
    <property type="term" value="F:carbon-carbon lyase activity"/>
    <property type="evidence" value="ECO:0007669"/>
    <property type="project" value="InterPro"/>
</dbReference>
<dbReference type="GO" id="GO:0008270">
    <property type="term" value="F:zinc ion binding"/>
    <property type="evidence" value="ECO:0007669"/>
    <property type="project" value="UniProtKB-UniRule"/>
</dbReference>
<dbReference type="GO" id="GO:0009228">
    <property type="term" value="P:thiamine biosynthetic process"/>
    <property type="evidence" value="ECO:0007669"/>
    <property type="project" value="UniProtKB-KW"/>
</dbReference>
<dbReference type="GO" id="GO:0009229">
    <property type="term" value="P:thiamine diphosphate biosynthetic process"/>
    <property type="evidence" value="ECO:0007669"/>
    <property type="project" value="UniProtKB-UniRule"/>
</dbReference>
<dbReference type="FunFam" id="3.20.20.540:FF:000001">
    <property type="entry name" value="Phosphomethylpyrimidine synthase"/>
    <property type="match status" value="1"/>
</dbReference>
<dbReference type="Gene3D" id="6.10.250.620">
    <property type="match status" value="1"/>
</dbReference>
<dbReference type="Gene3D" id="3.20.20.540">
    <property type="entry name" value="Radical SAM ThiC family, central domain"/>
    <property type="match status" value="1"/>
</dbReference>
<dbReference type="HAMAP" id="MF_00089">
    <property type="entry name" value="ThiC"/>
    <property type="match status" value="1"/>
</dbReference>
<dbReference type="InterPro" id="IPR037509">
    <property type="entry name" value="ThiC"/>
</dbReference>
<dbReference type="InterPro" id="IPR038521">
    <property type="entry name" value="ThiC/Bza_core_dom"/>
</dbReference>
<dbReference type="InterPro" id="IPR002817">
    <property type="entry name" value="ThiC/BzaA/B"/>
</dbReference>
<dbReference type="NCBIfam" id="NF009895">
    <property type="entry name" value="PRK13352.1"/>
    <property type="match status" value="1"/>
</dbReference>
<dbReference type="NCBIfam" id="TIGR00190">
    <property type="entry name" value="thiC"/>
    <property type="match status" value="1"/>
</dbReference>
<dbReference type="PANTHER" id="PTHR30557:SF1">
    <property type="entry name" value="PHOSPHOMETHYLPYRIMIDINE SYNTHASE, CHLOROPLASTIC"/>
    <property type="match status" value="1"/>
</dbReference>
<dbReference type="PANTHER" id="PTHR30557">
    <property type="entry name" value="THIAMINE BIOSYNTHESIS PROTEIN THIC"/>
    <property type="match status" value="1"/>
</dbReference>
<dbReference type="Pfam" id="PF01964">
    <property type="entry name" value="ThiC_Rad_SAM"/>
    <property type="match status" value="1"/>
</dbReference>
<dbReference type="SFLD" id="SFLDF00407">
    <property type="entry name" value="phosphomethylpyrimidine_syntha"/>
    <property type="match status" value="1"/>
</dbReference>
<dbReference type="SFLD" id="SFLDG01114">
    <property type="entry name" value="phosphomethylpyrimidine_syntha"/>
    <property type="match status" value="1"/>
</dbReference>
<dbReference type="SFLD" id="SFLDS00113">
    <property type="entry name" value="Radical_SAM_Phosphomethylpyrim"/>
    <property type="match status" value="1"/>
</dbReference>
<name>THIC_DESRM</name>
<reference key="1">
    <citation type="submission" date="2007-03" db="EMBL/GenBank/DDBJ databases">
        <title>Complete sequence of Desulfotomaculum reducens MI-1.</title>
        <authorList>
            <consortium name="US DOE Joint Genome Institute"/>
            <person name="Copeland A."/>
            <person name="Lucas S."/>
            <person name="Lapidus A."/>
            <person name="Barry K."/>
            <person name="Detter J.C."/>
            <person name="Glavina del Rio T."/>
            <person name="Hammon N."/>
            <person name="Israni S."/>
            <person name="Dalin E."/>
            <person name="Tice H."/>
            <person name="Pitluck S."/>
            <person name="Sims D."/>
            <person name="Brettin T."/>
            <person name="Bruce D."/>
            <person name="Han C."/>
            <person name="Tapia R."/>
            <person name="Schmutz J."/>
            <person name="Larimer F."/>
            <person name="Land M."/>
            <person name="Hauser L."/>
            <person name="Kyrpides N."/>
            <person name="Kim E."/>
            <person name="Tebo B.M."/>
            <person name="Richardson P."/>
        </authorList>
    </citation>
    <scope>NUCLEOTIDE SEQUENCE [LARGE SCALE GENOMIC DNA]</scope>
    <source>
        <strain>ATCC BAA-1160 / DSM 100696 / MI-1</strain>
    </source>
</reference>
<keyword id="KW-0004">4Fe-4S</keyword>
<keyword id="KW-0408">Iron</keyword>
<keyword id="KW-0411">Iron-sulfur</keyword>
<keyword id="KW-0456">Lyase</keyword>
<keyword id="KW-0479">Metal-binding</keyword>
<keyword id="KW-1185">Reference proteome</keyword>
<keyword id="KW-0949">S-adenosyl-L-methionine</keyword>
<keyword id="KW-0784">Thiamine biosynthesis</keyword>
<keyword id="KW-0862">Zinc</keyword>
<organism>
    <name type="scientific">Desulforamulus reducens (strain ATCC BAA-1160 / DSM 100696 / MI-1)</name>
    <name type="common">Desulfotomaculum reducens</name>
    <dbReference type="NCBI Taxonomy" id="349161"/>
    <lineage>
        <taxon>Bacteria</taxon>
        <taxon>Bacillati</taxon>
        <taxon>Bacillota</taxon>
        <taxon>Clostridia</taxon>
        <taxon>Eubacteriales</taxon>
        <taxon>Peptococcaceae</taxon>
        <taxon>Desulforamulus</taxon>
    </lineage>
</organism>
<comment type="function">
    <text evidence="1">Catalyzes the synthesis of the hydroxymethylpyrimidine phosphate (HMP-P) moiety of thiamine from aminoimidazole ribotide (AIR) in a radical S-adenosyl-L-methionine (SAM)-dependent reaction.</text>
</comment>
<comment type="catalytic activity">
    <reaction evidence="1">
        <text>5-amino-1-(5-phospho-beta-D-ribosyl)imidazole + S-adenosyl-L-methionine = 4-amino-2-methyl-5-(phosphooxymethyl)pyrimidine + CO + 5'-deoxyadenosine + formate + L-methionine + 3 H(+)</text>
        <dbReference type="Rhea" id="RHEA:24840"/>
        <dbReference type="ChEBI" id="CHEBI:15378"/>
        <dbReference type="ChEBI" id="CHEBI:15740"/>
        <dbReference type="ChEBI" id="CHEBI:17245"/>
        <dbReference type="ChEBI" id="CHEBI:17319"/>
        <dbReference type="ChEBI" id="CHEBI:57844"/>
        <dbReference type="ChEBI" id="CHEBI:58354"/>
        <dbReference type="ChEBI" id="CHEBI:59789"/>
        <dbReference type="ChEBI" id="CHEBI:137981"/>
        <dbReference type="EC" id="4.1.99.17"/>
    </reaction>
</comment>
<comment type="cofactor">
    <cofactor evidence="1">
        <name>[4Fe-4S] cluster</name>
        <dbReference type="ChEBI" id="CHEBI:49883"/>
    </cofactor>
    <text evidence="1">Binds 1 [4Fe-4S] cluster per subunit. The cluster is coordinated with 3 cysteines and an exchangeable S-adenosyl-L-methionine.</text>
</comment>
<comment type="pathway">
    <text evidence="1">Cofactor biosynthesis; thiamine diphosphate biosynthesis.</text>
</comment>
<comment type="similarity">
    <text evidence="1">Belongs to the ThiC family.</text>
</comment>
<proteinExistence type="inferred from homology"/>
<sequence length="432" mass="46958">MTQMLAARAGEITTAMKRVAEKEGLSPEFIRQGVAEGSIVIPANINHRNLDPVGFGKGLKTKVNANIGTSTSFTDIEKELEKLKVVLEAGADAVMDLSTGGEIDQGRRRIIEESTIAVGTVPIYQSFLENRNKRGSMIAMTADDLFEVVERHCSDGVDFITVHCGITLEVLERIKKQSRITDIVSRGGSFLTGWMLHHGKENPLYEQFDRLLDICLKYDVTLSLGDGLRPGCLADATDRAQIQELIILGELVDKAREKGVQAMVEGPGHVPLDQIRANIEVQKTLCKGAPFYVLGPLVTDVAPGYDHITAAIGGTVAAAAGADFLCYVTPAEHLGLPTLEDVREGIMASRIAAHAADIVKGIPGALEWDKKMARARKALDWDEQIKLAIDPQRAAKIRQERNPDGHEACTMCGDFCAMKIVAQYLGKEPESC</sequence>
<feature type="chain" id="PRO_1000071253" description="Phosphomethylpyrimidine synthase">
    <location>
        <begin position="1"/>
        <end position="432"/>
    </location>
</feature>
<feature type="binding site" evidence="1">
    <location>
        <position position="66"/>
    </location>
    <ligand>
        <name>substrate</name>
    </ligand>
</feature>
<feature type="binding site" evidence="1">
    <location>
        <position position="95"/>
    </location>
    <ligand>
        <name>substrate</name>
    </ligand>
</feature>
<feature type="binding site" evidence="1">
    <location>
        <position position="124"/>
    </location>
    <ligand>
        <name>substrate</name>
    </ligand>
</feature>
<feature type="binding site" evidence="1">
    <location>
        <position position="163"/>
    </location>
    <ligand>
        <name>substrate</name>
    </ligand>
</feature>
<feature type="binding site" evidence="1">
    <location>
        <begin position="185"/>
        <end position="187"/>
    </location>
    <ligand>
        <name>substrate</name>
    </ligand>
</feature>
<feature type="binding site" evidence="1">
    <location>
        <begin position="226"/>
        <end position="229"/>
    </location>
    <ligand>
        <name>substrate</name>
    </ligand>
</feature>
<feature type="binding site" evidence="1">
    <location>
        <position position="265"/>
    </location>
    <ligand>
        <name>substrate</name>
    </ligand>
</feature>
<feature type="binding site" evidence="1">
    <location>
        <position position="269"/>
    </location>
    <ligand>
        <name>Zn(2+)</name>
        <dbReference type="ChEBI" id="CHEBI:29105"/>
    </ligand>
</feature>
<feature type="binding site" evidence="1">
    <location>
        <position position="292"/>
    </location>
    <ligand>
        <name>substrate</name>
    </ligand>
</feature>
<feature type="binding site" evidence="1">
    <location>
        <position position="333"/>
    </location>
    <ligand>
        <name>Zn(2+)</name>
        <dbReference type="ChEBI" id="CHEBI:29105"/>
    </ligand>
</feature>
<feature type="binding site" evidence="1">
    <location>
        <position position="409"/>
    </location>
    <ligand>
        <name>[4Fe-4S] cluster</name>
        <dbReference type="ChEBI" id="CHEBI:49883"/>
        <note>4Fe-4S-S-AdoMet</note>
    </ligand>
</feature>
<feature type="binding site" evidence="1">
    <location>
        <position position="412"/>
    </location>
    <ligand>
        <name>[4Fe-4S] cluster</name>
        <dbReference type="ChEBI" id="CHEBI:49883"/>
        <note>4Fe-4S-S-AdoMet</note>
    </ligand>
</feature>
<feature type="binding site" evidence="1">
    <location>
        <position position="416"/>
    </location>
    <ligand>
        <name>[4Fe-4S] cluster</name>
        <dbReference type="ChEBI" id="CHEBI:49883"/>
        <note>4Fe-4S-S-AdoMet</note>
    </ligand>
</feature>